<proteinExistence type="inferred from homology"/>
<feature type="chain" id="PRO_0000217607" description="Photosystem I assembly protein Ycf4">
    <location>
        <begin position="1"/>
        <end position="181"/>
    </location>
</feature>
<feature type="transmembrane region" description="Helical" evidence="1">
    <location>
        <begin position="19"/>
        <end position="41"/>
    </location>
</feature>
<feature type="transmembrane region" description="Helical" evidence="1">
    <location>
        <begin position="61"/>
        <end position="83"/>
    </location>
</feature>
<protein>
    <recommendedName>
        <fullName evidence="1">Photosystem I assembly protein Ycf4</fullName>
    </recommendedName>
</protein>
<sequence>MNTKIRTDLILGSKRFSNYAWCFILMTGGIGFCLTGVGSYFNLHTILFVKFSDINFIPQGIVMMFYGTIAILFSLFLMYSIFTDVGGGYNKYDKEKKEIEIFRLGYNKKNKQMLLKYNFRDIKSIKIELKDDINPKREIYLVTKNKNQIPLTRIGEPLLLSDVENQAIELANFLNIPIEGI</sequence>
<evidence type="ECO:0000255" key="1">
    <source>
        <dbReference type="HAMAP-Rule" id="MF_00437"/>
    </source>
</evidence>
<keyword id="KW-0150">Chloroplast</keyword>
<keyword id="KW-0472">Membrane</keyword>
<keyword id="KW-0602">Photosynthesis</keyword>
<keyword id="KW-0934">Plastid</keyword>
<keyword id="KW-0793">Thylakoid</keyword>
<keyword id="KW-0812">Transmembrane</keyword>
<keyword id="KW-1133">Transmembrane helix</keyword>
<geneLocation type="chloroplast"/>
<comment type="function">
    <text evidence="1">Seems to be required for the assembly of the photosystem I complex.</text>
</comment>
<comment type="subcellular location">
    <subcellularLocation>
        <location evidence="1">Plastid</location>
        <location evidence="1">Chloroplast thylakoid membrane</location>
        <topology evidence="1">Multi-pass membrane protein</topology>
    </subcellularLocation>
</comment>
<comment type="similarity">
    <text evidence="1">Belongs to the Ycf4 family.</text>
</comment>
<gene>
    <name evidence="1" type="primary">ycf4</name>
</gene>
<reference key="1">
    <citation type="journal article" date="1999" name="J. Mol. Evol.">
        <title>The plastid genome of the cryptophyte alga, Guillardia theta: complete sequence and conserved synteny groups confirm its common ancestry with red algae.</title>
        <authorList>
            <person name="Douglas S.E."/>
            <person name="Penny S.L."/>
        </authorList>
    </citation>
    <scope>NUCLEOTIDE SEQUENCE [LARGE SCALE GENOMIC DNA]</scope>
</reference>
<organism>
    <name type="scientific">Guillardia theta</name>
    <name type="common">Cryptophyte</name>
    <name type="synonym">Cryptomonas phi</name>
    <dbReference type="NCBI Taxonomy" id="55529"/>
    <lineage>
        <taxon>Eukaryota</taxon>
        <taxon>Cryptophyceae</taxon>
        <taxon>Pyrenomonadales</taxon>
        <taxon>Geminigeraceae</taxon>
        <taxon>Guillardia</taxon>
    </lineage>
</organism>
<name>YCF4_GUITH</name>
<accession>O78467</accession>
<dbReference type="EMBL" id="AF041468">
    <property type="protein sequence ID" value="AAC35658.1"/>
    <property type="molecule type" value="Genomic_DNA"/>
</dbReference>
<dbReference type="RefSeq" id="NP_050724.1">
    <property type="nucleotide sequence ID" value="NC_000926.1"/>
</dbReference>
<dbReference type="SMR" id="O78467"/>
<dbReference type="GeneID" id="857028"/>
<dbReference type="HOGENOM" id="CLU_095465_0_0_1"/>
<dbReference type="OMA" id="RFSNYWW"/>
<dbReference type="GO" id="GO:0009535">
    <property type="term" value="C:chloroplast thylakoid membrane"/>
    <property type="evidence" value="ECO:0007669"/>
    <property type="project" value="UniProtKB-SubCell"/>
</dbReference>
<dbReference type="GO" id="GO:0009522">
    <property type="term" value="C:photosystem I"/>
    <property type="evidence" value="ECO:0007669"/>
    <property type="project" value="InterPro"/>
</dbReference>
<dbReference type="GO" id="GO:0015979">
    <property type="term" value="P:photosynthesis"/>
    <property type="evidence" value="ECO:0007669"/>
    <property type="project" value="UniProtKB-UniRule"/>
</dbReference>
<dbReference type="HAMAP" id="MF_00437">
    <property type="entry name" value="Ycf4"/>
    <property type="match status" value="1"/>
</dbReference>
<dbReference type="InterPro" id="IPR003359">
    <property type="entry name" value="PSI_Ycf4_assembly"/>
</dbReference>
<dbReference type="Pfam" id="PF02392">
    <property type="entry name" value="Ycf4"/>
    <property type="match status" value="1"/>
</dbReference>